<evidence type="ECO:0000255" key="1">
    <source>
        <dbReference type="HAMAP-Rule" id="MF_00444"/>
    </source>
</evidence>
<sequence length="208" mass="23249">MTLIPIVVEQTSRGERAYDIYSRLVKERIIFVTGPIEDNMASVIVAQLLFLESENPDKDICMYINSPGGVVTAGLSIYDTMQYINPDVSTLCIGQAASMGSLLLAAGTKGKRYSLPHSRIMIHQPSGGYHGQATDIEIHANEILRVKKKLNQIYEKHTGNSLKKIEGMMERDKFMDPEEARKIGLIDRVIAERTDIEIENIKVKQKVG</sequence>
<organism>
    <name type="scientific">Wolbachia sp. subsp. Drosophila simulans (strain wRi)</name>
    <dbReference type="NCBI Taxonomy" id="66084"/>
    <lineage>
        <taxon>Bacteria</taxon>
        <taxon>Pseudomonadati</taxon>
        <taxon>Pseudomonadota</taxon>
        <taxon>Alphaproteobacteria</taxon>
        <taxon>Rickettsiales</taxon>
        <taxon>Anaplasmataceae</taxon>
        <taxon>Wolbachieae</taxon>
        <taxon>Wolbachia</taxon>
    </lineage>
</organism>
<accession>C0R2W3</accession>
<protein>
    <recommendedName>
        <fullName evidence="1">ATP-dependent Clp protease proteolytic subunit</fullName>
        <ecNumber evidence="1">3.4.21.92</ecNumber>
    </recommendedName>
    <alternativeName>
        <fullName evidence="1">Endopeptidase Clp</fullName>
    </alternativeName>
</protein>
<reference key="1">
    <citation type="journal article" date="2009" name="Proc. Natl. Acad. Sci. U.S.A.">
        <title>The mosaic genome structure of the Wolbachia wRi strain infecting Drosophila simulans.</title>
        <authorList>
            <person name="Klasson L."/>
            <person name="Westberg J."/>
            <person name="Sapountzis P."/>
            <person name="Naeslund K."/>
            <person name="Lutnaes Y."/>
            <person name="Darby A.C."/>
            <person name="Veneti Z."/>
            <person name="Chen L."/>
            <person name="Braig H.R."/>
            <person name="Garrett R."/>
            <person name="Bourtzis K."/>
            <person name="Andersson S.G."/>
        </authorList>
    </citation>
    <scope>NUCLEOTIDE SEQUENCE [LARGE SCALE GENOMIC DNA]</scope>
    <source>
        <strain>wRi</strain>
    </source>
</reference>
<keyword id="KW-0963">Cytoplasm</keyword>
<keyword id="KW-0378">Hydrolase</keyword>
<keyword id="KW-0645">Protease</keyword>
<keyword id="KW-0720">Serine protease</keyword>
<proteinExistence type="inferred from homology"/>
<feature type="chain" id="PRO_1000135174" description="ATP-dependent Clp protease proteolytic subunit">
    <location>
        <begin position="1"/>
        <end position="208"/>
    </location>
</feature>
<feature type="active site" description="Nucleophile" evidence="1">
    <location>
        <position position="98"/>
    </location>
</feature>
<feature type="active site" evidence="1">
    <location>
        <position position="123"/>
    </location>
</feature>
<dbReference type="EC" id="3.4.21.92" evidence="1"/>
<dbReference type="EMBL" id="CP001391">
    <property type="protein sequence ID" value="ACN95255.1"/>
    <property type="molecule type" value="Genomic_DNA"/>
</dbReference>
<dbReference type="RefSeq" id="WP_006280254.1">
    <property type="nucleotide sequence ID" value="NZ_MKIF01000197.1"/>
</dbReference>
<dbReference type="SMR" id="C0R2W3"/>
<dbReference type="STRING" id="66084.WRi_004690"/>
<dbReference type="MEROPS" id="S14.001"/>
<dbReference type="KEGG" id="wri:WRi_004690"/>
<dbReference type="HOGENOM" id="CLU_058707_3_2_5"/>
<dbReference type="Proteomes" id="UP000001293">
    <property type="component" value="Chromosome"/>
</dbReference>
<dbReference type="GO" id="GO:0005737">
    <property type="term" value="C:cytoplasm"/>
    <property type="evidence" value="ECO:0007669"/>
    <property type="project" value="UniProtKB-SubCell"/>
</dbReference>
<dbReference type="GO" id="GO:0009368">
    <property type="term" value="C:endopeptidase Clp complex"/>
    <property type="evidence" value="ECO:0007669"/>
    <property type="project" value="TreeGrafter"/>
</dbReference>
<dbReference type="GO" id="GO:0004176">
    <property type="term" value="F:ATP-dependent peptidase activity"/>
    <property type="evidence" value="ECO:0007669"/>
    <property type="project" value="InterPro"/>
</dbReference>
<dbReference type="GO" id="GO:0051117">
    <property type="term" value="F:ATPase binding"/>
    <property type="evidence" value="ECO:0007669"/>
    <property type="project" value="TreeGrafter"/>
</dbReference>
<dbReference type="GO" id="GO:0004252">
    <property type="term" value="F:serine-type endopeptidase activity"/>
    <property type="evidence" value="ECO:0007669"/>
    <property type="project" value="UniProtKB-UniRule"/>
</dbReference>
<dbReference type="GO" id="GO:0006515">
    <property type="term" value="P:protein quality control for misfolded or incompletely synthesized proteins"/>
    <property type="evidence" value="ECO:0007669"/>
    <property type="project" value="TreeGrafter"/>
</dbReference>
<dbReference type="CDD" id="cd07017">
    <property type="entry name" value="S14_ClpP_2"/>
    <property type="match status" value="1"/>
</dbReference>
<dbReference type="FunFam" id="3.90.226.10:FF:000001">
    <property type="entry name" value="ATP-dependent Clp protease proteolytic subunit"/>
    <property type="match status" value="1"/>
</dbReference>
<dbReference type="Gene3D" id="3.90.226.10">
    <property type="entry name" value="2-enoyl-CoA Hydratase, Chain A, domain 1"/>
    <property type="match status" value="1"/>
</dbReference>
<dbReference type="HAMAP" id="MF_00444">
    <property type="entry name" value="ClpP"/>
    <property type="match status" value="1"/>
</dbReference>
<dbReference type="InterPro" id="IPR001907">
    <property type="entry name" value="ClpP"/>
</dbReference>
<dbReference type="InterPro" id="IPR029045">
    <property type="entry name" value="ClpP/crotonase-like_dom_sf"/>
</dbReference>
<dbReference type="InterPro" id="IPR023562">
    <property type="entry name" value="ClpP/TepA"/>
</dbReference>
<dbReference type="InterPro" id="IPR033135">
    <property type="entry name" value="ClpP_His_AS"/>
</dbReference>
<dbReference type="InterPro" id="IPR018215">
    <property type="entry name" value="ClpP_Ser_AS"/>
</dbReference>
<dbReference type="NCBIfam" id="TIGR00493">
    <property type="entry name" value="clpP"/>
    <property type="match status" value="1"/>
</dbReference>
<dbReference type="NCBIfam" id="NF001368">
    <property type="entry name" value="PRK00277.1"/>
    <property type="match status" value="1"/>
</dbReference>
<dbReference type="NCBIfam" id="NF009205">
    <property type="entry name" value="PRK12553.1"/>
    <property type="match status" value="1"/>
</dbReference>
<dbReference type="PANTHER" id="PTHR10381">
    <property type="entry name" value="ATP-DEPENDENT CLP PROTEASE PROTEOLYTIC SUBUNIT"/>
    <property type="match status" value="1"/>
</dbReference>
<dbReference type="PANTHER" id="PTHR10381:SF70">
    <property type="entry name" value="ATP-DEPENDENT CLP PROTEASE PROTEOLYTIC SUBUNIT"/>
    <property type="match status" value="1"/>
</dbReference>
<dbReference type="Pfam" id="PF00574">
    <property type="entry name" value="CLP_protease"/>
    <property type="match status" value="1"/>
</dbReference>
<dbReference type="PRINTS" id="PR00127">
    <property type="entry name" value="CLPPROTEASEP"/>
</dbReference>
<dbReference type="SUPFAM" id="SSF52096">
    <property type="entry name" value="ClpP/crotonase"/>
    <property type="match status" value="1"/>
</dbReference>
<dbReference type="PROSITE" id="PS00382">
    <property type="entry name" value="CLP_PROTEASE_HIS"/>
    <property type="match status" value="1"/>
</dbReference>
<dbReference type="PROSITE" id="PS00381">
    <property type="entry name" value="CLP_PROTEASE_SER"/>
    <property type="match status" value="1"/>
</dbReference>
<comment type="function">
    <text evidence="1">Cleaves peptides in various proteins in a process that requires ATP hydrolysis. Has a chymotrypsin-like activity. Plays a major role in the degradation of misfolded proteins.</text>
</comment>
<comment type="catalytic activity">
    <reaction evidence="1">
        <text>Hydrolysis of proteins to small peptides in the presence of ATP and magnesium. alpha-casein is the usual test substrate. In the absence of ATP, only oligopeptides shorter than five residues are hydrolyzed (such as succinyl-Leu-Tyr-|-NHMec, and Leu-Tyr-Leu-|-Tyr-Trp, in which cleavage of the -Tyr-|-Leu- and -Tyr-|-Trp bonds also occurs).</text>
        <dbReference type="EC" id="3.4.21.92"/>
    </reaction>
</comment>
<comment type="subunit">
    <text evidence="1">Fourteen ClpP subunits assemble into 2 heptameric rings which stack back to back to give a disk-like structure with a central cavity, resembling the structure of eukaryotic proteasomes.</text>
</comment>
<comment type="subcellular location">
    <subcellularLocation>
        <location evidence="1">Cytoplasm</location>
    </subcellularLocation>
</comment>
<comment type="similarity">
    <text evidence="1">Belongs to the peptidase S14 family.</text>
</comment>
<name>CLPP_WOLWR</name>
<gene>
    <name evidence="1" type="primary">clpP</name>
    <name type="ordered locus">WRi_004690</name>
</gene>